<accession>A6TGE9</accession>
<keyword id="KW-0489">Methyltransferase</keyword>
<keyword id="KW-0949">S-adenosyl-L-methionine</keyword>
<keyword id="KW-0808">Transferase</keyword>
<keyword id="KW-0819">tRNA processing</keyword>
<protein>
    <recommendedName>
        <fullName evidence="1">tRNA/tmRNA (uracil-C(5))-methyltransferase</fullName>
        <ecNumber evidence="1">2.1.1.-</ecNumber>
        <ecNumber evidence="1">2.1.1.35</ecNumber>
    </recommendedName>
    <alternativeName>
        <fullName evidence="1">tRNA (uracil(54)-C(5))-methyltransferase</fullName>
    </alternativeName>
    <alternativeName>
        <fullName evidence="1">tRNA(m5U54)-methyltransferase</fullName>
        <shortName evidence="1">RUMT</shortName>
    </alternativeName>
    <alternativeName>
        <fullName evidence="1">tmRNA (uracil(341)-C(5))-methyltransferase</fullName>
    </alternativeName>
</protein>
<gene>
    <name evidence="1" type="primary">trmA</name>
    <name type="ordered locus">KPN78578_42090</name>
    <name type="ORF">KPN_04254</name>
</gene>
<name>TRMA_KLEP7</name>
<sequence>MTPEHLPTEQYEAQLAEKVVRLQTMMAPFAAPVPEVFRSPVSHYRMRAEFRLWHDGDDLYHIIFDQQTRSRIRVDSFPAASALINQLMTAMLEGVRNNPVLRQKLFQIDYLTTLSNQAVVSVLYHKKLDDAWREQAEALRDALRAQGLNVHLIGRATKTKIELDQDYIDERLPVGGREMIYRQVENSFTQPNAAMNIQMLEWALDVTKGATGDLLELYCGNGNFSLALARNFDRVLATEIAKPSVAAAQYNIAANHIDNVQIIRMAAEEFTQAMNGVRQFNRLQGIDLHSYQCETIFVDPPRSGLDSETEKMVQAYPRILYISCNPETLCRNLETLSQTHNVTRLALFDQFPYTHHMECGVLLTRK</sequence>
<organism>
    <name type="scientific">Klebsiella pneumoniae subsp. pneumoniae (strain ATCC 700721 / MGH 78578)</name>
    <dbReference type="NCBI Taxonomy" id="272620"/>
    <lineage>
        <taxon>Bacteria</taxon>
        <taxon>Pseudomonadati</taxon>
        <taxon>Pseudomonadota</taxon>
        <taxon>Gammaproteobacteria</taxon>
        <taxon>Enterobacterales</taxon>
        <taxon>Enterobacteriaceae</taxon>
        <taxon>Klebsiella/Raoultella group</taxon>
        <taxon>Klebsiella</taxon>
        <taxon>Klebsiella pneumoniae complex</taxon>
    </lineage>
</organism>
<proteinExistence type="inferred from homology"/>
<comment type="function">
    <text evidence="1">Dual-specificity methyltransferase that catalyzes the formation of 5-methyluridine at position 54 (m5U54) in all tRNAs, and that of position 341 (m5U341) in tmRNA (transfer-mRNA).</text>
</comment>
<comment type="catalytic activity">
    <reaction evidence="1">
        <text>uridine(54) in tRNA + S-adenosyl-L-methionine = 5-methyluridine(54) in tRNA + S-adenosyl-L-homocysteine + H(+)</text>
        <dbReference type="Rhea" id="RHEA:42712"/>
        <dbReference type="Rhea" id="RHEA-COMP:10167"/>
        <dbReference type="Rhea" id="RHEA-COMP:10193"/>
        <dbReference type="ChEBI" id="CHEBI:15378"/>
        <dbReference type="ChEBI" id="CHEBI:57856"/>
        <dbReference type="ChEBI" id="CHEBI:59789"/>
        <dbReference type="ChEBI" id="CHEBI:65315"/>
        <dbReference type="ChEBI" id="CHEBI:74447"/>
        <dbReference type="EC" id="2.1.1.35"/>
    </reaction>
</comment>
<comment type="catalytic activity">
    <reaction evidence="1">
        <text>uridine(341) in tmRNA + S-adenosyl-L-methionine = 5-methyluridine(341) in tmRNA + S-adenosyl-L-homocysteine + H(+)</text>
        <dbReference type="Rhea" id="RHEA:43612"/>
        <dbReference type="Rhea" id="RHEA-COMP:10630"/>
        <dbReference type="Rhea" id="RHEA-COMP:10631"/>
        <dbReference type="ChEBI" id="CHEBI:15378"/>
        <dbReference type="ChEBI" id="CHEBI:57856"/>
        <dbReference type="ChEBI" id="CHEBI:59789"/>
        <dbReference type="ChEBI" id="CHEBI:65315"/>
        <dbReference type="ChEBI" id="CHEBI:74447"/>
    </reaction>
</comment>
<comment type="similarity">
    <text evidence="1">Belongs to the class I-like SAM-binding methyltransferase superfamily. RNA M5U methyltransferase family. TrmA subfamily.</text>
</comment>
<evidence type="ECO:0000255" key="1">
    <source>
        <dbReference type="HAMAP-Rule" id="MF_01011"/>
    </source>
</evidence>
<dbReference type="EC" id="2.1.1.-" evidence="1"/>
<dbReference type="EC" id="2.1.1.35" evidence="1"/>
<dbReference type="EMBL" id="CP000647">
    <property type="protein sequence ID" value="ABR79633.1"/>
    <property type="molecule type" value="Genomic_DNA"/>
</dbReference>
<dbReference type="RefSeq" id="WP_015959219.1">
    <property type="nucleotide sequence ID" value="NC_009648.1"/>
</dbReference>
<dbReference type="SMR" id="A6TGE9"/>
<dbReference type="STRING" id="272620.KPN_04254"/>
<dbReference type="PaxDb" id="272620-KPN_04254"/>
<dbReference type="EnsemblBacteria" id="ABR79633">
    <property type="protein sequence ID" value="ABR79633"/>
    <property type="gene ID" value="KPN_04254"/>
</dbReference>
<dbReference type="KEGG" id="kpn:KPN_04254"/>
<dbReference type="HOGENOM" id="CLU_043022_0_0_6"/>
<dbReference type="Proteomes" id="UP000000265">
    <property type="component" value="Chromosome"/>
</dbReference>
<dbReference type="GO" id="GO:0005829">
    <property type="term" value="C:cytosol"/>
    <property type="evidence" value="ECO:0007669"/>
    <property type="project" value="TreeGrafter"/>
</dbReference>
<dbReference type="GO" id="GO:0019843">
    <property type="term" value="F:rRNA binding"/>
    <property type="evidence" value="ECO:0007669"/>
    <property type="project" value="TreeGrafter"/>
</dbReference>
<dbReference type="GO" id="GO:0030697">
    <property type="term" value="F:tRNA (uracil(54)-C5)-methyltransferase activity, S-adenosyl methionine-dependent"/>
    <property type="evidence" value="ECO:0007669"/>
    <property type="project" value="UniProtKB-UniRule"/>
</dbReference>
<dbReference type="GO" id="GO:0000049">
    <property type="term" value="F:tRNA binding"/>
    <property type="evidence" value="ECO:0007669"/>
    <property type="project" value="TreeGrafter"/>
</dbReference>
<dbReference type="GO" id="GO:0030488">
    <property type="term" value="P:tRNA methylation"/>
    <property type="evidence" value="ECO:0007669"/>
    <property type="project" value="UniProtKB-UniRule"/>
</dbReference>
<dbReference type="CDD" id="cd02440">
    <property type="entry name" value="AdoMet_MTases"/>
    <property type="match status" value="1"/>
</dbReference>
<dbReference type="FunFam" id="2.40.50.1070:FF:000001">
    <property type="entry name" value="tRNA/tmRNA (uracil-C(5))-methyltransferase"/>
    <property type="match status" value="1"/>
</dbReference>
<dbReference type="FunFam" id="3.40.50.150:FF:000012">
    <property type="entry name" value="tRNA/tmRNA (uracil-C(5))-methyltransferase"/>
    <property type="match status" value="1"/>
</dbReference>
<dbReference type="Gene3D" id="2.40.50.1070">
    <property type="match status" value="1"/>
</dbReference>
<dbReference type="Gene3D" id="3.40.50.150">
    <property type="entry name" value="Vaccinia Virus protein VP39"/>
    <property type="match status" value="1"/>
</dbReference>
<dbReference type="HAMAP" id="MF_01011">
    <property type="entry name" value="RNA_methyltr_TrmA"/>
    <property type="match status" value="1"/>
</dbReference>
<dbReference type="InterPro" id="IPR030390">
    <property type="entry name" value="MeTrfase_TrmA_AS"/>
</dbReference>
<dbReference type="InterPro" id="IPR030391">
    <property type="entry name" value="MeTrfase_TrmA_CS"/>
</dbReference>
<dbReference type="InterPro" id="IPR029063">
    <property type="entry name" value="SAM-dependent_MTases_sf"/>
</dbReference>
<dbReference type="InterPro" id="IPR011869">
    <property type="entry name" value="TrmA_MeTrfase"/>
</dbReference>
<dbReference type="InterPro" id="IPR010280">
    <property type="entry name" value="U5_MeTrfase_fam"/>
</dbReference>
<dbReference type="NCBIfam" id="TIGR02143">
    <property type="entry name" value="trmA_only"/>
    <property type="match status" value="1"/>
</dbReference>
<dbReference type="PANTHER" id="PTHR47790">
    <property type="entry name" value="TRNA/TMRNA (URACIL-C(5))-METHYLTRANSFERASE"/>
    <property type="match status" value="1"/>
</dbReference>
<dbReference type="PANTHER" id="PTHR47790:SF2">
    <property type="entry name" value="TRNA_TMRNA (URACIL-C(5))-METHYLTRANSFERASE"/>
    <property type="match status" value="1"/>
</dbReference>
<dbReference type="Pfam" id="PF05958">
    <property type="entry name" value="tRNA_U5-meth_tr"/>
    <property type="match status" value="1"/>
</dbReference>
<dbReference type="SUPFAM" id="SSF53335">
    <property type="entry name" value="S-adenosyl-L-methionine-dependent methyltransferases"/>
    <property type="match status" value="1"/>
</dbReference>
<dbReference type="PROSITE" id="PS51687">
    <property type="entry name" value="SAM_MT_RNA_M5U"/>
    <property type="match status" value="1"/>
</dbReference>
<dbReference type="PROSITE" id="PS01230">
    <property type="entry name" value="TRMA_1"/>
    <property type="match status" value="1"/>
</dbReference>
<dbReference type="PROSITE" id="PS01231">
    <property type="entry name" value="TRMA_2"/>
    <property type="match status" value="1"/>
</dbReference>
<feature type="chain" id="PRO_1000072910" description="tRNA/tmRNA (uracil-C(5))-methyltransferase">
    <location>
        <begin position="1"/>
        <end position="366"/>
    </location>
</feature>
<feature type="active site" description="Nucleophile" evidence="1">
    <location>
        <position position="324"/>
    </location>
</feature>
<feature type="active site" description="Proton acceptor" evidence="1">
    <location>
        <position position="358"/>
    </location>
</feature>
<feature type="binding site" evidence="1">
    <location>
        <position position="190"/>
    </location>
    <ligand>
        <name>S-adenosyl-L-methionine</name>
        <dbReference type="ChEBI" id="CHEBI:59789"/>
    </ligand>
</feature>
<feature type="binding site" evidence="1">
    <location>
        <position position="218"/>
    </location>
    <ligand>
        <name>S-adenosyl-L-methionine</name>
        <dbReference type="ChEBI" id="CHEBI:59789"/>
    </ligand>
</feature>
<feature type="binding site" evidence="1">
    <location>
        <position position="223"/>
    </location>
    <ligand>
        <name>S-adenosyl-L-methionine</name>
        <dbReference type="ChEBI" id="CHEBI:59789"/>
    </ligand>
</feature>
<feature type="binding site" evidence="1">
    <location>
        <position position="239"/>
    </location>
    <ligand>
        <name>S-adenosyl-L-methionine</name>
        <dbReference type="ChEBI" id="CHEBI:59789"/>
    </ligand>
</feature>
<feature type="binding site" evidence="1">
    <location>
        <position position="299"/>
    </location>
    <ligand>
        <name>S-adenosyl-L-methionine</name>
        <dbReference type="ChEBI" id="CHEBI:59789"/>
    </ligand>
</feature>
<reference key="1">
    <citation type="submission" date="2006-09" db="EMBL/GenBank/DDBJ databases">
        <authorList>
            <consortium name="The Klebsiella pneumonia Genome Sequencing Project"/>
            <person name="McClelland M."/>
            <person name="Sanderson E.K."/>
            <person name="Spieth J."/>
            <person name="Clifton W.S."/>
            <person name="Latreille P."/>
            <person name="Sabo A."/>
            <person name="Pepin K."/>
            <person name="Bhonagiri V."/>
            <person name="Porwollik S."/>
            <person name="Ali J."/>
            <person name="Wilson R.K."/>
        </authorList>
    </citation>
    <scope>NUCLEOTIDE SEQUENCE [LARGE SCALE GENOMIC DNA]</scope>
    <source>
        <strain>ATCC 700721 / MGH 78578</strain>
    </source>
</reference>